<accession>Q8ZRU5</accession>
<evidence type="ECO:0000255" key="1">
    <source>
        <dbReference type="HAMAP-Rule" id="MF_00038"/>
    </source>
</evidence>
<evidence type="ECO:0000305" key="2"/>
<sequence>MLVWLAEHLVKYYSGFNVFSYLTFRAIVSLLTALFISLWMGPRMIARLQKLSFGQVVRNDGPESHFSKRGTPTMGGIMILTSIVISVLLWAYPSNPYVWCVLVVLIGYGIIGFVDDYRKVVRKDTKGLIARWKYFWMSVIALGVAFALYLVGKDTPATQLVVPFFKDVMPQLGLFYILLSYFVIVGTGNAVNLTDGLDGLAIMPTVFVAAGFALVAWATGNMNFANYLHIPYLRHAGELVIVCTAIVGAGLGFLWFNTYPAQVFMGDVGSLALGGALGIIAVLLRQEFLLVIMGGVFVVETLSVILQVGSFKLRGQRIFRMAPIHHHYELKGWPEPRVIVRFWIISLMLVLIGLATLKVR</sequence>
<feature type="chain" id="PRO_0000108885" description="Phospho-N-acetylmuramoyl-pentapeptide-transferase">
    <location>
        <begin position="1"/>
        <end position="360"/>
    </location>
</feature>
<feature type="topological domain" description="Periplasmic" evidence="1">
    <location>
        <begin position="1"/>
        <end position="25"/>
    </location>
</feature>
<feature type="transmembrane region" description="Helical" evidence="1">
    <location>
        <begin position="26"/>
        <end position="46"/>
    </location>
</feature>
<feature type="topological domain" description="Cytoplasmic" evidence="1">
    <location>
        <begin position="47"/>
        <end position="71"/>
    </location>
</feature>
<feature type="transmembrane region" description="Helical" evidence="1">
    <location>
        <begin position="72"/>
        <end position="92"/>
    </location>
</feature>
<feature type="topological domain" description="Periplasmic" evidence="1">
    <location>
        <position position="93"/>
    </location>
</feature>
<feature type="transmembrane region" description="Helical" evidence="1">
    <location>
        <begin position="94"/>
        <end position="114"/>
    </location>
</feature>
<feature type="topological domain" description="Cytoplasmic" evidence="1">
    <location>
        <begin position="115"/>
        <end position="131"/>
    </location>
</feature>
<feature type="transmembrane region" description="Helical" evidence="1">
    <location>
        <begin position="132"/>
        <end position="152"/>
    </location>
</feature>
<feature type="topological domain" description="Periplasmic" evidence="1">
    <location>
        <begin position="153"/>
        <end position="167"/>
    </location>
</feature>
<feature type="transmembrane region" description="Helical" evidence="1">
    <location>
        <begin position="168"/>
        <end position="188"/>
    </location>
</feature>
<feature type="topological domain" description="Cytoplasmic" evidence="1">
    <location>
        <begin position="189"/>
        <end position="198"/>
    </location>
</feature>
<feature type="transmembrane region" description="Helical" evidence="1">
    <location>
        <begin position="199"/>
        <end position="219"/>
    </location>
</feature>
<feature type="topological domain" description="Periplasmic" evidence="1">
    <location>
        <begin position="220"/>
        <end position="235"/>
    </location>
</feature>
<feature type="transmembrane region" description="Helical" evidence="1">
    <location>
        <begin position="236"/>
        <end position="256"/>
    </location>
</feature>
<feature type="topological domain" description="Cytoplasmic" evidence="1">
    <location>
        <begin position="257"/>
        <end position="262"/>
    </location>
</feature>
<feature type="transmembrane region" description="Helical" evidence="1">
    <location>
        <begin position="263"/>
        <end position="283"/>
    </location>
</feature>
<feature type="topological domain" description="Periplasmic" evidence="1">
    <location>
        <begin position="284"/>
        <end position="287"/>
    </location>
</feature>
<feature type="transmembrane region" description="Helical" evidence="1">
    <location>
        <begin position="288"/>
        <end position="308"/>
    </location>
</feature>
<feature type="topological domain" description="Cytoplasmic" evidence="1">
    <location>
        <begin position="309"/>
        <end position="337"/>
    </location>
</feature>
<feature type="transmembrane region" description="Helical" evidence="1">
    <location>
        <begin position="338"/>
        <end position="358"/>
    </location>
</feature>
<feature type="topological domain" description="Periplasmic" evidence="1">
    <location>
        <begin position="359"/>
        <end position="360"/>
    </location>
</feature>
<dbReference type="EC" id="2.7.8.13" evidence="1"/>
<dbReference type="EMBL" id="AE006468">
    <property type="protein sequence ID" value="AAL19089.1"/>
    <property type="molecule type" value="Genomic_DNA"/>
</dbReference>
<dbReference type="RefSeq" id="NP_459130.1">
    <property type="nucleotide sequence ID" value="NC_003197.2"/>
</dbReference>
<dbReference type="RefSeq" id="WP_000964141.1">
    <property type="nucleotide sequence ID" value="NC_003197.2"/>
</dbReference>
<dbReference type="SMR" id="Q8ZRU5"/>
<dbReference type="STRING" id="99287.STM0125"/>
<dbReference type="PaxDb" id="99287-STM0125"/>
<dbReference type="GeneID" id="1251643"/>
<dbReference type="KEGG" id="stm:STM0125"/>
<dbReference type="PATRIC" id="fig|99287.12.peg.131"/>
<dbReference type="HOGENOM" id="CLU_023982_0_0_6"/>
<dbReference type="OMA" id="DTPTMGG"/>
<dbReference type="PhylomeDB" id="Q8ZRU5"/>
<dbReference type="BioCyc" id="SENT99287:STM0125-MONOMER"/>
<dbReference type="UniPathway" id="UPA00219"/>
<dbReference type="Proteomes" id="UP000001014">
    <property type="component" value="Chromosome"/>
</dbReference>
<dbReference type="GO" id="GO:0005886">
    <property type="term" value="C:plasma membrane"/>
    <property type="evidence" value="ECO:0000318"/>
    <property type="project" value="GO_Central"/>
</dbReference>
<dbReference type="GO" id="GO:0046872">
    <property type="term" value="F:metal ion binding"/>
    <property type="evidence" value="ECO:0007669"/>
    <property type="project" value="UniProtKB-KW"/>
</dbReference>
<dbReference type="GO" id="GO:0008963">
    <property type="term" value="F:phospho-N-acetylmuramoyl-pentapeptide-transferase activity"/>
    <property type="evidence" value="ECO:0000318"/>
    <property type="project" value="GO_Central"/>
</dbReference>
<dbReference type="GO" id="GO:0051992">
    <property type="term" value="F:UDP-N-acetylmuramoyl-L-alanyl-D-glutamyl-meso-2,6-diaminopimelyl-D-alanyl-D-alanine:undecaprenyl-phosphate transferase activity"/>
    <property type="evidence" value="ECO:0007669"/>
    <property type="project" value="RHEA"/>
</dbReference>
<dbReference type="GO" id="GO:0051301">
    <property type="term" value="P:cell division"/>
    <property type="evidence" value="ECO:0007669"/>
    <property type="project" value="UniProtKB-KW"/>
</dbReference>
<dbReference type="GO" id="GO:0044038">
    <property type="term" value="P:cell wall macromolecule biosynthetic process"/>
    <property type="evidence" value="ECO:0000318"/>
    <property type="project" value="GO_Central"/>
</dbReference>
<dbReference type="GO" id="GO:0071555">
    <property type="term" value="P:cell wall organization"/>
    <property type="evidence" value="ECO:0000318"/>
    <property type="project" value="GO_Central"/>
</dbReference>
<dbReference type="GO" id="GO:0009252">
    <property type="term" value="P:peptidoglycan biosynthetic process"/>
    <property type="evidence" value="ECO:0007669"/>
    <property type="project" value="UniProtKB-UniRule"/>
</dbReference>
<dbReference type="GO" id="GO:0008360">
    <property type="term" value="P:regulation of cell shape"/>
    <property type="evidence" value="ECO:0007669"/>
    <property type="project" value="UniProtKB-KW"/>
</dbReference>
<dbReference type="CDD" id="cd06852">
    <property type="entry name" value="GT_MraY"/>
    <property type="match status" value="1"/>
</dbReference>
<dbReference type="HAMAP" id="MF_00038">
    <property type="entry name" value="MraY"/>
    <property type="match status" value="1"/>
</dbReference>
<dbReference type="InterPro" id="IPR000715">
    <property type="entry name" value="Glycosyl_transferase_4"/>
</dbReference>
<dbReference type="InterPro" id="IPR003524">
    <property type="entry name" value="PNAcMuramoyl-5peptid_Trfase"/>
</dbReference>
<dbReference type="InterPro" id="IPR018480">
    <property type="entry name" value="PNAcMuramoyl-5peptid_Trfase_CS"/>
</dbReference>
<dbReference type="NCBIfam" id="TIGR00445">
    <property type="entry name" value="mraY"/>
    <property type="match status" value="1"/>
</dbReference>
<dbReference type="PANTHER" id="PTHR22926">
    <property type="entry name" value="PHOSPHO-N-ACETYLMURAMOYL-PENTAPEPTIDE-TRANSFERASE"/>
    <property type="match status" value="1"/>
</dbReference>
<dbReference type="PANTHER" id="PTHR22926:SF5">
    <property type="entry name" value="PHOSPHO-N-ACETYLMURAMOYL-PENTAPEPTIDE-TRANSFERASE HOMOLOG"/>
    <property type="match status" value="1"/>
</dbReference>
<dbReference type="Pfam" id="PF00953">
    <property type="entry name" value="Glycos_transf_4"/>
    <property type="match status" value="1"/>
</dbReference>
<dbReference type="Pfam" id="PF10555">
    <property type="entry name" value="MraY_sig1"/>
    <property type="match status" value="1"/>
</dbReference>
<dbReference type="PROSITE" id="PS01347">
    <property type="entry name" value="MRAY_1"/>
    <property type="match status" value="1"/>
</dbReference>
<dbReference type="PROSITE" id="PS01348">
    <property type="entry name" value="MRAY_2"/>
    <property type="match status" value="1"/>
</dbReference>
<name>MRAY_SALTY</name>
<gene>
    <name evidence="1" type="primary">mraY</name>
    <name type="ordered locus">STM0125</name>
</gene>
<reference key="1">
    <citation type="journal article" date="2001" name="Nature">
        <title>Complete genome sequence of Salmonella enterica serovar Typhimurium LT2.</title>
        <authorList>
            <person name="McClelland M."/>
            <person name="Sanderson K.E."/>
            <person name="Spieth J."/>
            <person name="Clifton S.W."/>
            <person name="Latreille P."/>
            <person name="Courtney L."/>
            <person name="Porwollik S."/>
            <person name="Ali J."/>
            <person name="Dante M."/>
            <person name="Du F."/>
            <person name="Hou S."/>
            <person name="Layman D."/>
            <person name="Leonard S."/>
            <person name="Nguyen C."/>
            <person name="Scott K."/>
            <person name="Holmes A."/>
            <person name="Grewal N."/>
            <person name="Mulvaney E."/>
            <person name="Ryan E."/>
            <person name="Sun H."/>
            <person name="Florea L."/>
            <person name="Miller W."/>
            <person name="Stoneking T."/>
            <person name="Nhan M."/>
            <person name="Waterston R."/>
            <person name="Wilson R.K."/>
        </authorList>
    </citation>
    <scope>NUCLEOTIDE SEQUENCE [LARGE SCALE GENOMIC DNA]</scope>
    <source>
        <strain>LT2 / SGSC1412 / ATCC 700720</strain>
    </source>
</reference>
<keyword id="KW-0131">Cell cycle</keyword>
<keyword id="KW-0132">Cell division</keyword>
<keyword id="KW-0997">Cell inner membrane</keyword>
<keyword id="KW-1003">Cell membrane</keyword>
<keyword id="KW-0133">Cell shape</keyword>
<keyword id="KW-0961">Cell wall biogenesis/degradation</keyword>
<keyword id="KW-0460">Magnesium</keyword>
<keyword id="KW-0472">Membrane</keyword>
<keyword id="KW-0479">Metal-binding</keyword>
<keyword id="KW-0573">Peptidoglycan synthesis</keyword>
<keyword id="KW-1185">Reference proteome</keyword>
<keyword id="KW-0808">Transferase</keyword>
<keyword id="KW-0812">Transmembrane</keyword>
<keyword id="KW-1133">Transmembrane helix</keyword>
<protein>
    <recommendedName>
        <fullName evidence="1">Phospho-N-acetylmuramoyl-pentapeptide-transferase</fullName>
        <ecNumber evidence="1">2.7.8.13</ecNumber>
    </recommendedName>
    <alternativeName>
        <fullName evidence="1">UDP-MurNAc-pentapeptide phosphotransferase</fullName>
    </alternativeName>
</protein>
<comment type="function">
    <text evidence="1">Catalyzes the initial step of the lipid cycle reactions in the biosynthesis of the cell wall peptidoglycan: transfers peptidoglycan precursor phospho-MurNAc-pentapeptide from UDP-MurNAc-pentapeptide onto the lipid carrier undecaprenyl phosphate, yielding undecaprenyl-pyrophosphoryl-MurNAc-pentapeptide, known as lipid I.</text>
</comment>
<comment type="catalytic activity">
    <reaction evidence="1">
        <text>UDP-N-acetyl-alpha-D-muramoyl-L-alanyl-gamma-D-glutamyl-meso-2,6-diaminopimeloyl-D-alanyl-D-alanine + di-trans,octa-cis-undecaprenyl phosphate = di-trans,octa-cis-undecaprenyl diphospho-N-acetyl-alpha-D-muramoyl-L-alanyl-D-glutamyl-meso-2,6-diaminopimeloyl-D-alanyl-D-alanine + UMP</text>
        <dbReference type="Rhea" id="RHEA:28386"/>
        <dbReference type="ChEBI" id="CHEBI:57865"/>
        <dbReference type="ChEBI" id="CHEBI:60392"/>
        <dbReference type="ChEBI" id="CHEBI:61386"/>
        <dbReference type="ChEBI" id="CHEBI:61387"/>
        <dbReference type="EC" id="2.7.8.13"/>
    </reaction>
</comment>
<comment type="cofactor">
    <cofactor evidence="1">
        <name>Mg(2+)</name>
        <dbReference type="ChEBI" id="CHEBI:18420"/>
    </cofactor>
</comment>
<comment type="pathway">
    <text evidence="1">Cell wall biogenesis; peptidoglycan biosynthesis.</text>
</comment>
<comment type="subcellular location">
    <subcellularLocation>
        <location evidence="1">Cell inner membrane</location>
        <topology evidence="1">Multi-pass membrane protein</topology>
    </subcellularLocation>
</comment>
<comment type="similarity">
    <text evidence="1 2">Belongs to the glycosyltransferase 4 family. MraY subfamily.</text>
</comment>
<proteinExistence type="inferred from homology"/>
<organism>
    <name type="scientific">Salmonella typhimurium (strain LT2 / SGSC1412 / ATCC 700720)</name>
    <dbReference type="NCBI Taxonomy" id="99287"/>
    <lineage>
        <taxon>Bacteria</taxon>
        <taxon>Pseudomonadati</taxon>
        <taxon>Pseudomonadota</taxon>
        <taxon>Gammaproteobacteria</taxon>
        <taxon>Enterobacterales</taxon>
        <taxon>Enterobacteriaceae</taxon>
        <taxon>Salmonella</taxon>
    </lineage>
</organism>